<protein>
    <recommendedName>
        <fullName>Putative L-lactate dehydrogenase operon regulatory protein</fullName>
    </recommendedName>
</protein>
<evidence type="ECO:0000250" key="1"/>
<evidence type="ECO:0000255" key="2">
    <source>
        <dbReference type="PROSITE-ProRule" id="PRU00307"/>
    </source>
</evidence>
<feature type="chain" id="PRO_0000050653" description="Putative L-lactate dehydrogenase operon regulatory protein">
    <location>
        <begin position="1"/>
        <end position="258"/>
    </location>
</feature>
<feature type="domain" description="HTH gntR-type" evidence="2">
    <location>
        <begin position="6"/>
        <end position="74"/>
    </location>
</feature>
<feature type="DNA-binding region" description="H-T-H motif" evidence="2">
    <location>
        <begin position="34"/>
        <end position="53"/>
    </location>
</feature>
<name>LLDR_SHIFL</name>
<comment type="function">
    <text evidence="1">May be a regulatory protein for the LCT genes.</text>
</comment>
<organism>
    <name type="scientific">Shigella flexneri</name>
    <dbReference type="NCBI Taxonomy" id="623"/>
    <lineage>
        <taxon>Bacteria</taxon>
        <taxon>Pseudomonadati</taxon>
        <taxon>Pseudomonadota</taxon>
        <taxon>Gammaproteobacteria</taxon>
        <taxon>Enterobacterales</taxon>
        <taxon>Enterobacteriaceae</taxon>
        <taxon>Shigella</taxon>
    </lineage>
</organism>
<reference key="1">
    <citation type="journal article" date="2002" name="Nucleic Acids Res.">
        <title>Genome sequence of Shigella flexneri 2a: insights into pathogenicity through comparison with genomes of Escherichia coli K12 and O157.</title>
        <authorList>
            <person name="Jin Q."/>
            <person name="Yuan Z."/>
            <person name="Xu J."/>
            <person name="Wang Y."/>
            <person name="Shen Y."/>
            <person name="Lu W."/>
            <person name="Wang J."/>
            <person name="Liu H."/>
            <person name="Yang J."/>
            <person name="Yang F."/>
            <person name="Zhang X."/>
            <person name="Zhang J."/>
            <person name="Yang G."/>
            <person name="Wu H."/>
            <person name="Qu D."/>
            <person name="Dong J."/>
            <person name="Sun L."/>
            <person name="Xue Y."/>
            <person name="Zhao A."/>
            <person name="Gao Y."/>
            <person name="Zhu J."/>
            <person name="Kan B."/>
            <person name="Ding K."/>
            <person name="Chen S."/>
            <person name="Cheng H."/>
            <person name="Yao Z."/>
            <person name="He B."/>
            <person name="Chen R."/>
            <person name="Ma D."/>
            <person name="Qiang B."/>
            <person name="Wen Y."/>
            <person name="Hou Y."/>
            <person name="Yu J."/>
        </authorList>
    </citation>
    <scope>NUCLEOTIDE SEQUENCE [LARGE SCALE GENOMIC DNA]</scope>
    <source>
        <strain>301 / Serotype 2a</strain>
    </source>
</reference>
<reference key="2">
    <citation type="journal article" date="2003" name="Infect. Immun.">
        <title>Complete genome sequence and comparative genomics of Shigella flexneri serotype 2a strain 2457T.</title>
        <authorList>
            <person name="Wei J."/>
            <person name="Goldberg M.B."/>
            <person name="Burland V."/>
            <person name="Venkatesan M.M."/>
            <person name="Deng W."/>
            <person name="Fournier G."/>
            <person name="Mayhew G.F."/>
            <person name="Plunkett G. III"/>
            <person name="Rose D.J."/>
            <person name="Darling A."/>
            <person name="Mau B."/>
            <person name="Perna N.T."/>
            <person name="Payne S.M."/>
            <person name="Runyen-Janecky L.J."/>
            <person name="Zhou S."/>
            <person name="Schwartz D.C."/>
            <person name="Blattner F.R."/>
        </authorList>
    </citation>
    <scope>NUCLEOTIDE SEQUENCE [LARGE SCALE GENOMIC DNA]</scope>
    <source>
        <strain>ATCC 700930 / 2457T / Serotype 2a</strain>
    </source>
</reference>
<gene>
    <name type="primary">lldR</name>
    <name type="synonym">lctR</name>
    <name type="ordered locus">SF3643</name>
    <name type="ordered locus">S4125</name>
</gene>
<dbReference type="EMBL" id="AE005674">
    <property type="protein sequence ID" value="AAN45090.2"/>
    <property type="molecule type" value="Genomic_DNA"/>
</dbReference>
<dbReference type="EMBL" id="AE014073">
    <property type="protein sequence ID" value="AAP19102.1"/>
    <property type="molecule type" value="Genomic_DNA"/>
</dbReference>
<dbReference type="RefSeq" id="NP_709383.2">
    <property type="nucleotide sequence ID" value="NC_004337.2"/>
</dbReference>
<dbReference type="RefSeq" id="WP_000636500.1">
    <property type="nucleotide sequence ID" value="NZ_WPGW01000082.1"/>
</dbReference>
<dbReference type="SMR" id="P0ACL8"/>
<dbReference type="STRING" id="198214.SF3643"/>
<dbReference type="PaxDb" id="198214-SF3643"/>
<dbReference type="GeneID" id="1026271"/>
<dbReference type="GeneID" id="93778318"/>
<dbReference type="KEGG" id="sfl:SF3643"/>
<dbReference type="KEGG" id="sfx:S4125"/>
<dbReference type="PATRIC" id="fig|198214.7.peg.4302"/>
<dbReference type="HOGENOM" id="CLU_017584_9_5_6"/>
<dbReference type="Proteomes" id="UP000001006">
    <property type="component" value="Chromosome"/>
</dbReference>
<dbReference type="Proteomes" id="UP000002673">
    <property type="component" value="Chromosome"/>
</dbReference>
<dbReference type="GO" id="GO:0003677">
    <property type="term" value="F:DNA binding"/>
    <property type="evidence" value="ECO:0007669"/>
    <property type="project" value="UniProtKB-KW"/>
</dbReference>
<dbReference type="GO" id="GO:0003700">
    <property type="term" value="F:DNA-binding transcription factor activity"/>
    <property type="evidence" value="ECO:0007669"/>
    <property type="project" value="InterPro"/>
</dbReference>
<dbReference type="CDD" id="cd07377">
    <property type="entry name" value="WHTH_GntR"/>
    <property type="match status" value="1"/>
</dbReference>
<dbReference type="FunFam" id="1.20.120.530:FF:000009">
    <property type="entry name" value="DNA-binding transcriptional repressor LldR"/>
    <property type="match status" value="1"/>
</dbReference>
<dbReference type="Gene3D" id="1.20.120.530">
    <property type="entry name" value="GntR ligand-binding domain-like"/>
    <property type="match status" value="1"/>
</dbReference>
<dbReference type="Gene3D" id="1.10.10.10">
    <property type="entry name" value="Winged helix-like DNA-binding domain superfamily/Winged helix DNA-binding domain"/>
    <property type="match status" value="1"/>
</dbReference>
<dbReference type="InterPro" id="IPR011711">
    <property type="entry name" value="GntR_C"/>
</dbReference>
<dbReference type="InterPro" id="IPR008920">
    <property type="entry name" value="TF_FadR/GntR_C"/>
</dbReference>
<dbReference type="InterPro" id="IPR000524">
    <property type="entry name" value="Tscrpt_reg_HTH_GntR"/>
</dbReference>
<dbReference type="InterPro" id="IPR036388">
    <property type="entry name" value="WH-like_DNA-bd_sf"/>
</dbReference>
<dbReference type="InterPro" id="IPR036390">
    <property type="entry name" value="WH_DNA-bd_sf"/>
</dbReference>
<dbReference type="NCBIfam" id="NF007741">
    <property type="entry name" value="PRK10421.1"/>
    <property type="match status" value="1"/>
</dbReference>
<dbReference type="PANTHER" id="PTHR43537:SF18">
    <property type="entry name" value="L-LACTATE DEHYDROGENASE OPERON REGULATORY PROTEIN-RELATED"/>
    <property type="match status" value="1"/>
</dbReference>
<dbReference type="PANTHER" id="PTHR43537">
    <property type="entry name" value="TRANSCRIPTIONAL REGULATOR, GNTR FAMILY"/>
    <property type="match status" value="1"/>
</dbReference>
<dbReference type="Pfam" id="PF07729">
    <property type="entry name" value="FCD"/>
    <property type="match status" value="1"/>
</dbReference>
<dbReference type="Pfam" id="PF00392">
    <property type="entry name" value="GntR"/>
    <property type="match status" value="1"/>
</dbReference>
<dbReference type="PRINTS" id="PR00035">
    <property type="entry name" value="HTHGNTR"/>
</dbReference>
<dbReference type="SMART" id="SM00895">
    <property type="entry name" value="FCD"/>
    <property type="match status" value="1"/>
</dbReference>
<dbReference type="SMART" id="SM00345">
    <property type="entry name" value="HTH_GNTR"/>
    <property type="match status" value="1"/>
</dbReference>
<dbReference type="SUPFAM" id="SSF48008">
    <property type="entry name" value="GntR ligand-binding domain-like"/>
    <property type="match status" value="1"/>
</dbReference>
<dbReference type="SUPFAM" id="SSF46785">
    <property type="entry name" value="Winged helix' DNA-binding domain"/>
    <property type="match status" value="1"/>
</dbReference>
<dbReference type="PROSITE" id="PS50949">
    <property type="entry name" value="HTH_GNTR"/>
    <property type="match status" value="1"/>
</dbReference>
<sequence>MIVLPRRLSDEVADRVRALIDEKNLEAGMKLPAERQLAMQLGVSRNSLREALAKLVSEGVLLSRRGGGTFIRWRHDTWSEQNIVQPLKTLMADDPDYSFDILEARYAIEASTAWHAAMRATPGDKEKIQLCFEATLSEDPDIASQADVRFHLAIAEASHNIVLLQTMRGFFDVLQSSVKHSRQRMYLVPPVFSQLTEQHQAVIDAIFAGDADGARKAMMAHLSFVHTTMKRFDEDQARHARITRLPGEHNEHSREKNA</sequence>
<accession>P0ACL8</accession>
<accession>P33233</accession>
<keyword id="KW-0238">DNA-binding</keyword>
<keyword id="KW-1185">Reference proteome</keyword>
<keyword id="KW-0804">Transcription</keyword>
<keyword id="KW-0805">Transcription regulation</keyword>
<proteinExistence type="inferred from homology"/>